<organism>
    <name type="scientific">Yersinia pestis (strain Pestoides F)</name>
    <dbReference type="NCBI Taxonomy" id="386656"/>
    <lineage>
        <taxon>Bacteria</taxon>
        <taxon>Pseudomonadati</taxon>
        <taxon>Pseudomonadota</taxon>
        <taxon>Gammaproteobacteria</taxon>
        <taxon>Enterobacterales</taxon>
        <taxon>Yersiniaceae</taxon>
        <taxon>Yersinia</taxon>
    </lineage>
</organism>
<reference key="1">
    <citation type="submission" date="2007-02" db="EMBL/GenBank/DDBJ databases">
        <title>Complete sequence of chromosome of Yersinia pestis Pestoides F.</title>
        <authorList>
            <consortium name="US DOE Joint Genome Institute"/>
            <person name="Copeland A."/>
            <person name="Lucas S."/>
            <person name="Lapidus A."/>
            <person name="Barry K."/>
            <person name="Detter J.C."/>
            <person name="Glavina del Rio T."/>
            <person name="Hammon N."/>
            <person name="Israni S."/>
            <person name="Dalin E."/>
            <person name="Tice H."/>
            <person name="Pitluck S."/>
            <person name="Di Bartolo G."/>
            <person name="Chain P."/>
            <person name="Malfatti S."/>
            <person name="Shin M."/>
            <person name="Vergez L."/>
            <person name="Schmutz J."/>
            <person name="Larimer F."/>
            <person name="Land M."/>
            <person name="Hauser L."/>
            <person name="Worsham P."/>
            <person name="Chu M."/>
            <person name="Bearden S."/>
            <person name="Garcia E."/>
            <person name="Richardson P."/>
        </authorList>
    </citation>
    <scope>NUCLEOTIDE SEQUENCE [LARGE SCALE GENOMIC DNA]</scope>
    <source>
        <strain>Pestoides F</strain>
    </source>
</reference>
<feature type="chain" id="PRO_1000012111" description="Bis(5'-nucleosyl)-tetraphosphatase, symmetrical">
    <location>
        <begin position="1"/>
        <end position="289"/>
    </location>
</feature>
<evidence type="ECO:0000255" key="1">
    <source>
        <dbReference type="HAMAP-Rule" id="MF_00199"/>
    </source>
</evidence>
<name>APAH_YERPP</name>
<comment type="function">
    <text evidence="1">Hydrolyzes diadenosine 5',5'''-P1,P4-tetraphosphate to yield ADP.</text>
</comment>
<comment type="catalytic activity">
    <reaction evidence="1">
        <text>P(1),P(4)-bis(5'-adenosyl) tetraphosphate + H2O = 2 ADP + 2 H(+)</text>
        <dbReference type="Rhea" id="RHEA:24252"/>
        <dbReference type="ChEBI" id="CHEBI:15377"/>
        <dbReference type="ChEBI" id="CHEBI:15378"/>
        <dbReference type="ChEBI" id="CHEBI:58141"/>
        <dbReference type="ChEBI" id="CHEBI:456216"/>
        <dbReference type="EC" id="3.6.1.41"/>
    </reaction>
</comment>
<comment type="similarity">
    <text evidence="1">Belongs to the Ap4A hydrolase family.</text>
</comment>
<keyword id="KW-0378">Hydrolase</keyword>
<dbReference type="EC" id="3.6.1.41" evidence="1"/>
<dbReference type="EMBL" id="CP000668">
    <property type="protein sequence ID" value="ABP41502.1"/>
    <property type="molecule type" value="Genomic_DNA"/>
</dbReference>
<dbReference type="RefSeq" id="WP_002210492.1">
    <property type="nucleotide sequence ID" value="NZ_CP009715.1"/>
</dbReference>
<dbReference type="SMR" id="A4TQE0"/>
<dbReference type="GeneID" id="57974120"/>
<dbReference type="KEGG" id="ypp:YPDSF_3144"/>
<dbReference type="PATRIC" id="fig|386656.14.peg.1211"/>
<dbReference type="GO" id="GO:0008803">
    <property type="term" value="F:bis(5'-nucleosyl)-tetraphosphatase (symmetrical) activity"/>
    <property type="evidence" value="ECO:0007669"/>
    <property type="project" value="UniProtKB-UniRule"/>
</dbReference>
<dbReference type="CDD" id="cd07422">
    <property type="entry name" value="MPP_ApaH"/>
    <property type="match status" value="1"/>
</dbReference>
<dbReference type="FunFam" id="3.60.21.10:FF:000013">
    <property type="entry name" value="Bis(5'-nucleosyl)-tetraphosphatase, symmetrical"/>
    <property type="match status" value="1"/>
</dbReference>
<dbReference type="Gene3D" id="3.60.21.10">
    <property type="match status" value="1"/>
</dbReference>
<dbReference type="HAMAP" id="MF_00199">
    <property type="entry name" value="ApaH"/>
    <property type="match status" value="1"/>
</dbReference>
<dbReference type="InterPro" id="IPR004617">
    <property type="entry name" value="ApaH"/>
</dbReference>
<dbReference type="InterPro" id="IPR004843">
    <property type="entry name" value="Calcineurin-like_PHP_ApaH"/>
</dbReference>
<dbReference type="InterPro" id="IPR029052">
    <property type="entry name" value="Metallo-depent_PP-like"/>
</dbReference>
<dbReference type="NCBIfam" id="TIGR00668">
    <property type="entry name" value="apaH"/>
    <property type="match status" value="1"/>
</dbReference>
<dbReference type="NCBIfam" id="NF001204">
    <property type="entry name" value="PRK00166.1"/>
    <property type="match status" value="1"/>
</dbReference>
<dbReference type="PANTHER" id="PTHR40942">
    <property type="match status" value="1"/>
</dbReference>
<dbReference type="PANTHER" id="PTHR40942:SF4">
    <property type="entry name" value="CYTOCHROME C5"/>
    <property type="match status" value="1"/>
</dbReference>
<dbReference type="Pfam" id="PF00149">
    <property type="entry name" value="Metallophos"/>
    <property type="match status" value="1"/>
</dbReference>
<dbReference type="PIRSF" id="PIRSF000903">
    <property type="entry name" value="B5n-ttraPtase_sm"/>
    <property type="match status" value="1"/>
</dbReference>
<dbReference type="SUPFAM" id="SSF56300">
    <property type="entry name" value="Metallo-dependent phosphatases"/>
    <property type="match status" value="1"/>
</dbReference>
<gene>
    <name evidence="1" type="primary">apaH</name>
    <name type="ordered locus">YPDSF_3144</name>
</gene>
<protein>
    <recommendedName>
        <fullName evidence="1">Bis(5'-nucleosyl)-tetraphosphatase, symmetrical</fullName>
        <ecNumber evidence="1">3.6.1.41</ecNumber>
    </recommendedName>
    <alternativeName>
        <fullName evidence="1">Ap4A hydrolase</fullName>
    </alternativeName>
    <alternativeName>
        <fullName evidence="1">Diadenosine 5',5'''-P1,P4-tetraphosphate pyrophosphohydrolase</fullName>
    </alternativeName>
    <alternativeName>
        <fullName evidence="1">Diadenosine tetraphosphatase</fullName>
    </alternativeName>
</protein>
<sequence>MSTYLIGDIHGCLDELLALLAQVNFDPQQDTLWLTGDLVARGPASLDVLRYVRSLGPAVRMVLGNHDLHLLAVYAGISRNKPKDRITPLLDAPDADELINWLRRQPVLQVDDQLKLIMAHAGITPQWDIETAKMCAREVEAVLSSDSYPLFLDAMYGDMPNNWSPELTGLARLRFSTNALTRMRFCFPNGQLDMICKDTPENAPAPLKPWFDLPRLVDPEYSIIFGHWASLEGKGVPEGIYGLDTGCCWGGDLTLLRWDDKRYFTQRAFKAEAEINNNNGFAAGEAVQH</sequence>
<proteinExistence type="inferred from homology"/>
<accession>A4TQE0</accession>